<comment type="function">
    <text evidence="1">Activates the small RNA gene sgrS under glucose-phosphate stress conditions as well as yfdZ. Represses its own transcription under both stress and non-stress conditions. Might act as a sensor of the intracellular accumulation of phosphoglucose by binding these molecules in its C-terminal solute-binding domain.</text>
</comment>
<reference key="1">
    <citation type="journal article" date="2001" name="Nature">
        <title>Complete genome sequence of Salmonella enterica serovar Typhimurium LT2.</title>
        <authorList>
            <person name="McClelland M."/>
            <person name="Sanderson K.E."/>
            <person name="Spieth J."/>
            <person name="Clifton S.W."/>
            <person name="Latreille P."/>
            <person name="Courtney L."/>
            <person name="Porwollik S."/>
            <person name="Ali J."/>
            <person name="Dante M."/>
            <person name="Du F."/>
            <person name="Hou S."/>
            <person name="Layman D."/>
            <person name="Leonard S."/>
            <person name="Nguyen C."/>
            <person name="Scott K."/>
            <person name="Holmes A."/>
            <person name="Grewal N."/>
            <person name="Mulvaney E."/>
            <person name="Ryan E."/>
            <person name="Sun H."/>
            <person name="Florea L."/>
            <person name="Miller W."/>
            <person name="Stoneking T."/>
            <person name="Nhan M."/>
            <person name="Waterston R."/>
            <person name="Wilson R.K."/>
        </authorList>
    </citation>
    <scope>NUCLEOTIDE SEQUENCE [LARGE SCALE GENOMIC DNA]</scope>
    <source>
        <strain>LT2 / SGSC1412 / ATCC 700720</strain>
    </source>
</reference>
<accession>Q8ZRV0</accession>
<gene>
    <name evidence="1" type="primary">sgrR</name>
    <name type="ordered locus">STM0109</name>
</gene>
<protein>
    <recommendedName>
        <fullName evidence="1">HTH-type transcriptional regulator SgrR</fullName>
    </recommendedName>
</protein>
<keyword id="KW-0010">Activator</keyword>
<keyword id="KW-0238">DNA-binding</keyword>
<keyword id="KW-1185">Reference proteome</keyword>
<keyword id="KW-0678">Repressor</keyword>
<keyword id="KW-0804">Transcription</keyword>
<keyword id="KW-0805">Transcription regulation</keyword>
<proteinExistence type="inferred from homology"/>
<organism>
    <name type="scientific">Salmonella typhimurium (strain LT2 / SGSC1412 / ATCC 700720)</name>
    <dbReference type="NCBI Taxonomy" id="99287"/>
    <lineage>
        <taxon>Bacteria</taxon>
        <taxon>Pseudomonadati</taxon>
        <taxon>Pseudomonadota</taxon>
        <taxon>Gammaproteobacteria</taxon>
        <taxon>Enterobacterales</taxon>
        <taxon>Enterobacteriaceae</taxon>
        <taxon>Salmonella</taxon>
    </lineage>
</organism>
<name>SGRR_SALTY</name>
<evidence type="ECO:0000255" key="1">
    <source>
        <dbReference type="HAMAP-Rule" id="MF_01449"/>
    </source>
</evidence>
<dbReference type="EMBL" id="AE006468">
    <property type="protein sequence ID" value="AAL19073.1"/>
    <property type="molecule type" value="Genomic_DNA"/>
</dbReference>
<dbReference type="RefSeq" id="WP_001139042.1">
    <property type="nucleotide sequence ID" value="NC_003197.2"/>
</dbReference>
<dbReference type="SMR" id="Q8ZRV0"/>
<dbReference type="STRING" id="99287.STM0109"/>
<dbReference type="PaxDb" id="99287-STM0109"/>
<dbReference type="KEGG" id="stm:STM0109"/>
<dbReference type="PATRIC" id="fig|99287.12.peg.113"/>
<dbReference type="HOGENOM" id="CLU_017028_12_3_6"/>
<dbReference type="PhylomeDB" id="Q8ZRV0"/>
<dbReference type="BioCyc" id="SENT99287:STM0109-MONOMER"/>
<dbReference type="Proteomes" id="UP000001014">
    <property type="component" value="Chromosome"/>
</dbReference>
<dbReference type="GO" id="GO:0003677">
    <property type="term" value="F:DNA binding"/>
    <property type="evidence" value="ECO:0007669"/>
    <property type="project" value="UniProtKB-KW"/>
</dbReference>
<dbReference type="GO" id="GO:1904680">
    <property type="term" value="F:peptide transmembrane transporter activity"/>
    <property type="evidence" value="ECO:0000318"/>
    <property type="project" value="GO_Central"/>
</dbReference>
<dbReference type="GO" id="GO:0045892">
    <property type="term" value="P:negative regulation of DNA-templated transcription"/>
    <property type="evidence" value="ECO:0007669"/>
    <property type="project" value="UniProtKB-UniRule"/>
</dbReference>
<dbReference type="GO" id="GO:0015833">
    <property type="term" value="P:peptide transport"/>
    <property type="evidence" value="ECO:0000318"/>
    <property type="project" value="GO_Central"/>
</dbReference>
<dbReference type="GO" id="GO:0045893">
    <property type="term" value="P:positive regulation of DNA-templated transcription"/>
    <property type="evidence" value="ECO:0007669"/>
    <property type="project" value="UniProtKB-UniRule"/>
</dbReference>
<dbReference type="CDD" id="cd08507">
    <property type="entry name" value="PBP2_SgrR_like"/>
    <property type="match status" value="1"/>
</dbReference>
<dbReference type="FunFam" id="3.40.190.10:FF:000070">
    <property type="entry name" value="HTH-type transcriptional regulator SgrR"/>
    <property type="match status" value="1"/>
</dbReference>
<dbReference type="Gene3D" id="3.40.190.10">
    <property type="entry name" value="Periplasmic binding protein-like II"/>
    <property type="match status" value="1"/>
</dbReference>
<dbReference type="HAMAP" id="MF_01449">
    <property type="entry name" value="HTH_type_SgrR"/>
    <property type="match status" value="1"/>
</dbReference>
<dbReference type="InterPro" id="IPR039424">
    <property type="entry name" value="SBP_5"/>
</dbReference>
<dbReference type="InterPro" id="IPR000914">
    <property type="entry name" value="SBP_5_dom"/>
</dbReference>
<dbReference type="InterPro" id="IPR025370">
    <property type="entry name" value="SgrR_HTH_N"/>
</dbReference>
<dbReference type="InterPro" id="IPR023767">
    <property type="entry name" value="Tscrpt_reg_SgrR"/>
</dbReference>
<dbReference type="InterPro" id="IPR036390">
    <property type="entry name" value="WH_DNA-bd_sf"/>
</dbReference>
<dbReference type="NCBIfam" id="NF010149">
    <property type="entry name" value="PRK13626.1"/>
    <property type="match status" value="1"/>
</dbReference>
<dbReference type="PANTHER" id="PTHR30290:SF72">
    <property type="entry name" value="HTH-TYPE TRANSCRIPTIONAL REGULATOR SGRR"/>
    <property type="match status" value="1"/>
</dbReference>
<dbReference type="PANTHER" id="PTHR30290">
    <property type="entry name" value="PERIPLASMIC BINDING COMPONENT OF ABC TRANSPORTER"/>
    <property type="match status" value="1"/>
</dbReference>
<dbReference type="Pfam" id="PF00496">
    <property type="entry name" value="SBP_bac_5"/>
    <property type="match status" value="1"/>
</dbReference>
<dbReference type="Pfam" id="PF12793">
    <property type="entry name" value="SgrR_N"/>
    <property type="match status" value="1"/>
</dbReference>
<dbReference type="SUPFAM" id="SSF53850">
    <property type="entry name" value="Periplasmic binding protein-like II"/>
    <property type="match status" value="1"/>
</dbReference>
<dbReference type="SUPFAM" id="SSF46785">
    <property type="entry name" value="Winged helix' DNA-binding domain"/>
    <property type="match status" value="1"/>
</dbReference>
<feature type="chain" id="PRO_0000309250" description="HTH-type transcriptional regulator SgrR">
    <location>
        <begin position="1"/>
        <end position="552"/>
    </location>
</feature>
<feature type="domain" description="HTH marR-type" evidence="1">
    <location>
        <begin position="1"/>
        <end position="116"/>
    </location>
</feature>
<feature type="DNA-binding region" description="H-T-H motif" evidence="1">
    <location>
        <begin position="26"/>
        <end position="49"/>
    </location>
</feature>
<feature type="region of interest" description="Solute-binding" evidence="1">
    <location>
        <begin position="163"/>
        <end position="493"/>
    </location>
</feature>
<sequence>MPSGRLQQQFIRLWQCCDGKTQDTTLNELADLLNCSRRHMRTLLNTMQARGWLTWEAEVGRGKRSRLTFLYTGLALQQQRAEDLLEQDRIDQLVQLVGDKSAVRQMLISHLGRSFRQGRHILRVLYYRPMHNLLPGTALRRSETHIARQIFSSLTRVNEENGELEADIAHHWQQISPLLWRFYLRPGIHFHHGRELEMEDVISSLTRINTLPLYSHITKIDSPTAWTLDIHLSQPDRWLPWLLGQVPAMILPRKWETLANFASHPIGTGPYAVRRNTPNQLKILAFDDYFGYRALIDEVNVWVLPDISEEPACGLMLEGPIQGGEKAIESRLEEGCYYLLFDARTPRGAHPQVREWVSHVLSPTNLLYHADEPLQQLWFPAYGLLPRWHHARPGPGEKPAGLETLTLTFYREHIEHRVIARIMSALLAEHQVHLHIQEIDYDQWHAGEIESDIWLNSANFTLPLDFSLFAHLCEVPLLQNCIPRDWQGDAAQWRAGEMNLANWCQQLLANKAIVPLIHHWLIIQGQRSMRGLRMNTLGWFDFKSAWFAPPDP</sequence>